<reference key="1">
    <citation type="submission" date="2006-01" db="EMBL/GenBank/DDBJ databases">
        <authorList>
            <consortium name="NIH - Mammalian Gene Collection (MGC) project"/>
        </authorList>
    </citation>
    <scope>NUCLEOTIDE SEQUENCE [LARGE SCALE MRNA]</scope>
    <source>
        <strain>Hereford</strain>
        <tissue>Hypothalamus</tissue>
    </source>
</reference>
<gene>
    <name evidence="1" type="primary">BORCS7</name>
</gene>
<organism>
    <name type="scientific">Bos taurus</name>
    <name type="common">Bovine</name>
    <dbReference type="NCBI Taxonomy" id="9913"/>
    <lineage>
        <taxon>Eukaryota</taxon>
        <taxon>Metazoa</taxon>
        <taxon>Chordata</taxon>
        <taxon>Craniata</taxon>
        <taxon>Vertebrata</taxon>
        <taxon>Euteleostomi</taxon>
        <taxon>Mammalia</taxon>
        <taxon>Eutheria</taxon>
        <taxon>Laurasiatheria</taxon>
        <taxon>Artiodactyla</taxon>
        <taxon>Ruminantia</taxon>
        <taxon>Pecora</taxon>
        <taxon>Bovidae</taxon>
        <taxon>Bovinae</taxon>
        <taxon>Bos</taxon>
    </lineage>
</organism>
<dbReference type="EMBL" id="BC112697">
    <property type="protein sequence ID" value="AAI12698.1"/>
    <property type="status" value="ALT_INIT"/>
    <property type="molecule type" value="mRNA"/>
</dbReference>
<dbReference type="RefSeq" id="XP_002698544.2">
    <property type="nucleotide sequence ID" value="XM_002698498.4"/>
</dbReference>
<dbReference type="RefSeq" id="XP_015325077.1">
    <property type="nucleotide sequence ID" value="XM_015469591.1"/>
</dbReference>
<dbReference type="SMR" id="Q2KIB7"/>
<dbReference type="FunCoup" id="Q2KIB7">
    <property type="interactions" value="660"/>
</dbReference>
<dbReference type="STRING" id="9913.ENSBTAP00000074545"/>
<dbReference type="PaxDb" id="9913-ENSBTAP00000028310"/>
<dbReference type="GeneID" id="613274"/>
<dbReference type="KEGG" id="bta:613274"/>
<dbReference type="CTD" id="119032"/>
<dbReference type="eggNOG" id="ENOG502S2QS">
    <property type="taxonomic scope" value="Eukaryota"/>
</dbReference>
<dbReference type="HOGENOM" id="CLU_150749_1_0_1"/>
<dbReference type="InParanoid" id="Q2KIB7"/>
<dbReference type="OrthoDB" id="5567844at2759"/>
<dbReference type="Proteomes" id="UP000009136">
    <property type="component" value="Unplaced"/>
</dbReference>
<dbReference type="GO" id="GO:0099078">
    <property type="term" value="C:BORC complex"/>
    <property type="evidence" value="ECO:0000250"/>
    <property type="project" value="UniProtKB"/>
</dbReference>
<dbReference type="GO" id="GO:0005765">
    <property type="term" value="C:lysosomal membrane"/>
    <property type="evidence" value="ECO:0007669"/>
    <property type="project" value="UniProtKB-SubCell"/>
</dbReference>
<dbReference type="InterPro" id="IPR032143">
    <property type="entry name" value="BORCS7"/>
</dbReference>
<dbReference type="PANTHER" id="PTHR31397:SF3">
    <property type="entry name" value="BLOC-1-RELATED COMPLEX SUBUNIT 7"/>
    <property type="match status" value="1"/>
</dbReference>
<dbReference type="PANTHER" id="PTHR31397">
    <property type="entry name" value="BLOC-1-RELATED COMPLEX SUBUNIT 7 BORSC7"/>
    <property type="match status" value="1"/>
</dbReference>
<dbReference type="Pfam" id="PF16088">
    <property type="entry name" value="BORCS7"/>
    <property type="match status" value="1"/>
</dbReference>
<protein>
    <recommendedName>
        <fullName evidence="2">BLOC-1-related complex subunit 7</fullName>
    </recommendedName>
</protein>
<proteinExistence type="inferred from homology"/>
<keyword id="KW-0458">Lysosome</keyword>
<keyword id="KW-0472">Membrane</keyword>
<keyword id="KW-1185">Reference proteome</keyword>
<sequence>MATGTPDSQARFGQSVKGLLTEKVNTCGTDVIALTKQVLKGSRSSELLGQAARNMVLQEDAILHSEDSLRKMAIITTHLQYQQEAIQKNVEQSSNLQDQLNHLLK</sequence>
<evidence type="ECO:0000250" key="1">
    <source>
        <dbReference type="UniProtKB" id="Q96B45"/>
    </source>
</evidence>
<evidence type="ECO:0000305" key="2"/>
<name>BORC7_BOVIN</name>
<accession>Q2KIB7</accession>
<feature type="chain" id="PRO_0000359786" description="BLOC-1-related complex subunit 7">
    <location>
        <begin position="1"/>
        <end position="105"/>
    </location>
</feature>
<comment type="function">
    <text evidence="1">As part of the BORC complex may play a role in lysosomes movement and localization at the cell periphery. Associated with the cytosolic face of lysosomes, the BORC complex may recruit ARL8B and couple lysosomes to microtubule plus-end-directed kinesin motor.</text>
</comment>
<comment type="subunit">
    <text evidence="1">Component of the BLOC-one-related complex (BORC) which is composed of BLOC1S1, BLOC1S2, BORCS5, BORCS6, BORCS7, BORCS8, KXD1 and SNAPIN.</text>
</comment>
<comment type="subcellular location">
    <subcellularLocation>
        <location evidence="1">Lysosome membrane</location>
    </subcellularLocation>
</comment>
<comment type="similarity">
    <text evidence="2">Belongs to the BORCS7 family.</text>
</comment>
<comment type="sequence caution" evidence="2">
    <conflict type="erroneous initiation">
        <sequence resource="EMBL-CDS" id="AAI12698"/>
    </conflict>
    <text>Extended N-terminus.</text>
</comment>